<protein>
    <recommendedName>
        <fullName>Venom allergen 5</fullName>
    </recommendedName>
    <alternativeName>
        <fullName>Antigen 5</fullName>
    </alternativeName>
    <alternativeName>
        <fullName>Cysteine-rich venom protein</fullName>
        <shortName>CRVP</shortName>
    </alternativeName>
</protein>
<comment type="subcellular location">
    <subcellularLocation>
        <location evidence="1">Secreted</location>
    </subcellularLocation>
</comment>
<comment type="tissue specificity">
    <text>Expressed by the venom gland.</text>
</comment>
<comment type="allergen">
    <text evidence="1">Causes an allergic reaction in human.</text>
</comment>
<comment type="similarity">
    <text evidence="3">Belongs to the CRISP family. Venom allergen 5-like subfamily.</text>
</comment>
<name>VAL5_VESMC</name>
<evidence type="ECO:0000250" key="1"/>
<evidence type="ECO:0000255" key="2"/>
<evidence type="ECO:0000305" key="3"/>
<sequence length="227" mass="25832">MEISGLVYLIIIVTIIDLPYGKANNYCKIKCLKGGVHTACKYGSLKPNCGNKVVVSYGLTKQEKQDILKEHNDFRQKVARGLETRGNPGPQPPAKNMKNLVWNDELAYVAQVWANQCQYGHDTCRDVAKYQVGQNVALTGSTAAKYENPVNLVKMWENEVKDYNPKKKFSENNFIKIGHYTQMVWANTKEIGCGSMKYTENKWHYHYLVCNYGPSGNFGNEELYQTK</sequence>
<keyword id="KW-0020">Allergen</keyword>
<keyword id="KW-1015">Disulfide bond</keyword>
<keyword id="KW-0964">Secreted</keyword>
<keyword id="KW-0732">Signal</keyword>
<dbReference type="EMBL" id="DQ364142">
    <property type="protein sequence ID" value="ABC73068.1"/>
    <property type="molecule type" value="mRNA"/>
</dbReference>
<dbReference type="SMR" id="Q2L6Z1"/>
<dbReference type="Allergome" id="663">
    <property type="allergen name" value="Ves m 5"/>
</dbReference>
<dbReference type="GO" id="GO:0005576">
    <property type="term" value="C:extracellular region"/>
    <property type="evidence" value="ECO:0007669"/>
    <property type="project" value="UniProtKB-SubCell"/>
</dbReference>
<dbReference type="CDD" id="cd05380">
    <property type="entry name" value="CAP_euk"/>
    <property type="match status" value="1"/>
</dbReference>
<dbReference type="Gene3D" id="3.40.33.10">
    <property type="entry name" value="CAP"/>
    <property type="match status" value="1"/>
</dbReference>
<dbReference type="InterPro" id="IPR018244">
    <property type="entry name" value="Allrgn_V5/Tpx1_CS"/>
</dbReference>
<dbReference type="InterPro" id="IPR014044">
    <property type="entry name" value="CAP_dom"/>
</dbReference>
<dbReference type="InterPro" id="IPR035940">
    <property type="entry name" value="CAP_sf"/>
</dbReference>
<dbReference type="InterPro" id="IPR001283">
    <property type="entry name" value="CRISP-related"/>
</dbReference>
<dbReference type="InterPro" id="IPR002413">
    <property type="entry name" value="V5_allergen-like"/>
</dbReference>
<dbReference type="PANTHER" id="PTHR10334">
    <property type="entry name" value="CYSTEINE-RICH SECRETORY PROTEIN-RELATED"/>
    <property type="match status" value="1"/>
</dbReference>
<dbReference type="Pfam" id="PF00188">
    <property type="entry name" value="CAP"/>
    <property type="match status" value="1"/>
</dbReference>
<dbReference type="PRINTS" id="PR00838">
    <property type="entry name" value="V5ALLERGEN"/>
</dbReference>
<dbReference type="PRINTS" id="PR00837">
    <property type="entry name" value="V5TPXLIKE"/>
</dbReference>
<dbReference type="SMART" id="SM00198">
    <property type="entry name" value="SCP"/>
    <property type="match status" value="1"/>
</dbReference>
<dbReference type="SUPFAM" id="SSF55797">
    <property type="entry name" value="PR-1-like"/>
    <property type="match status" value="1"/>
</dbReference>
<dbReference type="PROSITE" id="PS01009">
    <property type="entry name" value="CRISP_1"/>
    <property type="match status" value="1"/>
</dbReference>
<dbReference type="PROSITE" id="PS01010">
    <property type="entry name" value="CRISP_2"/>
    <property type="match status" value="1"/>
</dbReference>
<proteinExistence type="evidence at transcript level"/>
<feature type="signal peptide" evidence="2">
    <location>
        <begin position="1"/>
        <end position="23"/>
    </location>
</feature>
<feature type="chain" id="PRO_0000401930" description="Venom allergen 5">
    <location>
        <begin position="24"/>
        <end position="227"/>
    </location>
</feature>
<feature type="domain" description="SCP">
    <location>
        <begin position="68"/>
        <end position="212"/>
    </location>
</feature>
<feature type="disulfide bond" evidence="1">
    <location>
        <begin position="27"/>
        <end position="40"/>
    </location>
</feature>
<feature type="disulfide bond" evidence="1">
    <location>
        <begin position="31"/>
        <end position="124"/>
    </location>
</feature>
<feature type="disulfide bond" evidence="1">
    <location>
        <begin position="49"/>
        <end position="117"/>
    </location>
</feature>
<feature type="disulfide bond" evidence="1">
    <location>
        <begin position="193"/>
        <end position="210"/>
    </location>
</feature>
<accession>Q2L6Z1</accession>
<organism>
    <name type="scientific">Vespula maculifrons</name>
    <name type="common">Eastern yellow jacket</name>
    <name type="synonym">Wasp</name>
    <dbReference type="NCBI Taxonomy" id="7453"/>
    <lineage>
        <taxon>Eukaryota</taxon>
        <taxon>Metazoa</taxon>
        <taxon>Ecdysozoa</taxon>
        <taxon>Arthropoda</taxon>
        <taxon>Hexapoda</taxon>
        <taxon>Insecta</taxon>
        <taxon>Pterygota</taxon>
        <taxon>Neoptera</taxon>
        <taxon>Endopterygota</taxon>
        <taxon>Hymenoptera</taxon>
        <taxon>Apocrita</taxon>
        <taxon>Aculeata</taxon>
        <taxon>Vespoidea</taxon>
        <taxon>Vespidae</taxon>
        <taxon>Vespinae</taxon>
        <taxon>Vespula</taxon>
    </lineage>
</organism>
<reference key="1">
    <citation type="submission" date="2006-01" db="EMBL/GenBank/DDBJ databases">
        <title>Cloning and sequencing of genes encoding allergen 5 from the venom of Vespula maculifrons.</title>
        <authorList>
            <person name="Zhang S."/>
            <person name="Shi W."/>
            <person name="Cheng J."/>
            <person name="Zhang C."/>
        </authorList>
    </citation>
    <scope>NUCLEOTIDE SEQUENCE [MRNA]</scope>
    <source>
        <tissue>Venom gland</tissue>
    </source>
</reference>